<reference key="1">
    <citation type="journal article" date="1995" name="Plant Mol. Biol. Rep.">
        <title>Complete nucleotide sequence of the Porphyra purpurea chloroplast genome.</title>
        <authorList>
            <person name="Reith M.E."/>
            <person name="Munholland J."/>
        </authorList>
    </citation>
    <scope>NUCLEOTIDE SEQUENCE [LARGE SCALE GENOMIC DNA]</scope>
    <source>
        <strain>Avonport</strain>
    </source>
</reference>
<comment type="function">
    <text evidence="1">This b-type cytochrome is tightly associated with the reaction center of photosystem II (PSII). PSII is a light-driven water:plastoquinone oxidoreductase that uses light energy to abstract electrons from H(2)O, generating O(2) and a proton gradient subsequently used for ATP formation. It consists of a core antenna complex that captures photons, and an electron transfer chain that converts photonic excitation into a charge separation.</text>
</comment>
<comment type="cofactor">
    <cofactor evidence="1">
        <name>heme b</name>
        <dbReference type="ChEBI" id="CHEBI:60344"/>
    </cofactor>
    <text evidence="1">With its partner (PsbE) binds heme. PSII binds additional chlorophylls, carotenoids and specific lipids.</text>
</comment>
<comment type="subunit">
    <text evidence="1">Heterodimer of an alpha subunit and a beta subunit. PSII is composed of 1 copy each of membrane proteins PsbA, PsbB, PsbC, PsbD, PsbE, PsbF, PsbH, PsbI, PsbJ, PsbK, PsbL, PsbM, PsbT, PsbX, PsbY, PsbZ, Psb30/Ycf12, at least 3 peripheral proteins of the oxygen-evolving complex and a large number of cofactors. It forms dimeric complexes.</text>
</comment>
<comment type="subcellular location">
    <subcellularLocation>
        <location evidence="1">Plastid</location>
        <location evidence="1">Chloroplast thylakoid membrane</location>
        <topology evidence="1">Single-pass membrane protein</topology>
    </subcellularLocation>
</comment>
<comment type="similarity">
    <text evidence="1">Belongs to the PsbE/PsbF family.</text>
</comment>
<keyword id="KW-0150">Chloroplast</keyword>
<keyword id="KW-0249">Electron transport</keyword>
<keyword id="KW-0349">Heme</keyword>
<keyword id="KW-0408">Iron</keyword>
<keyword id="KW-0472">Membrane</keyword>
<keyword id="KW-0479">Metal-binding</keyword>
<keyword id="KW-0602">Photosynthesis</keyword>
<keyword id="KW-0604">Photosystem II</keyword>
<keyword id="KW-0934">Plastid</keyword>
<keyword id="KW-0793">Thylakoid</keyword>
<keyword id="KW-0812">Transmembrane</keyword>
<keyword id="KW-1133">Transmembrane helix</keyword>
<keyword id="KW-0813">Transport</keyword>
<name>PSBF_PORPU</name>
<organism>
    <name type="scientific">Porphyra purpurea</name>
    <name type="common">Red seaweed</name>
    <name type="synonym">Ulva purpurea</name>
    <dbReference type="NCBI Taxonomy" id="2787"/>
    <lineage>
        <taxon>Eukaryota</taxon>
        <taxon>Rhodophyta</taxon>
        <taxon>Bangiophyceae</taxon>
        <taxon>Bangiales</taxon>
        <taxon>Bangiaceae</taxon>
        <taxon>Porphyra</taxon>
    </lineage>
</organism>
<gene>
    <name evidence="1" type="primary">psbF</name>
</gene>
<proteinExistence type="inferred from homology"/>
<accession>P51390</accession>
<dbReference type="EMBL" id="U38804">
    <property type="protein sequence ID" value="AAC08276.1"/>
    <property type="molecule type" value="Genomic_DNA"/>
</dbReference>
<dbReference type="PIR" id="S73311">
    <property type="entry name" value="S73311"/>
</dbReference>
<dbReference type="RefSeq" id="NP_054000.1">
    <property type="nucleotide sequence ID" value="NC_000925.1"/>
</dbReference>
<dbReference type="GeneID" id="810031"/>
<dbReference type="GO" id="GO:0009535">
    <property type="term" value="C:chloroplast thylakoid membrane"/>
    <property type="evidence" value="ECO:0007669"/>
    <property type="project" value="UniProtKB-SubCell"/>
</dbReference>
<dbReference type="GO" id="GO:0009539">
    <property type="term" value="C:photosystem II reaction center"/>
    <property type="evidence" value="ECO:0007669"/>
    <property type="project" value="InterPro"/>
</dbReference>
<dbReference type="GO" id="GO:0009055">
    <property type="term" value="F:electron transfer activity"/>
    <property type="evidence" value="ECO:0007669"/>
    <property type="project" value="UniProtKB-UniRule"/>
</dbReference>
<dbReference type="GO" id="GO:0020037">
    <property type="term" value="F:heme binding"/>
    <property type="evidence" value="ECO:0007669"/>
    <property type="project" value="InterPro"/>
</dbReference>
<dbReference type="GO" id="GO:0005506">
    <property type="term" value="F:iron ion binding"/>
    <property type="evidence" value="ECO:0007669"/>
    <property type="project" value="UniProtKB-UniRule"/>
</dbReference>
<dbReference type="GO" id="GO:0009767">
    <property type="term" value="P:photosynthetic electron transport chain"/>
    <property type="evidence" value="ECO:0007669"/>
    <property type="project" value="InterPro"/>
</dbReference>
<dbReference type="HAMAP" id="MF_00643">
    <property type="entry name" value="PSII_PsbF"/>
    <property type="match status" value="1"/>
</dbReference>
<dbReference type="InterPro" id="IPR006241">
    <property type="entry name" value="PSII_cyt_b559_bsu"/>
</dbReference>
<dbReference type="InterPro" id="IPR006216">
    <property type="entry name" value="PSII_cyt_b559_CS"/>
</dbReference>
<dbReference type="InterPro" id="IPR013081">
    <property type="entry name" value="PSII_cyt_b559_N"/>
</dbReference>
<dbReference type="NCBIfam" id="TIGR01333">
    <property type="entry name" value="cyt_b559_beta"/>
    <property type="match status" value="1"/>
</dbReference>
<dbReference type="Pfam" id="PF00283">
    <property type="entry name" value="Cytochrom_B559"/>
    <property type="match status" value="1"/>
</dbReference>
<dbReference type="PIRSF" id="PIRSF000037">
    <property type="entry name" value="PsbF"/>
    <property type="match status" value="1"/>
</dbReference>
<dbReference type="SUPFAM" id="SSF161045">
    <property type="entry name" value="Cytochrome b559 subunits"/>
    <property type="match status" value="1"/>
</dbReference>
<dbReference type="PROSITE" id="PS00537">
    <property type="entry name" value="CYTOCHROME_B559"/>
    <property type="match status" value="1"/>
</dbReference>
<feature type="chain" id="PRO_0000200443" description="Cytochrome b559 subunit beta">
    <location>
        <begin position="1"/>
        <end position="44"/>
    </location>
</feature>
<feature type="transmembrane region" description="Helical" evidence="1">
    <location>
        <begin position="19"/>
        <end position="35"/>
    </location>
</feature>
<feature type="binding site" description="axial binding residue" evidence="1">
    <location>
        <position position="23"/>
    </location>
    <ligand>
        <name>heme</name>
        <dbReference type="ChEBI" id="CHEBI:30413"/>
        <note>ligand shared with alpha subunit</note>
    </ligand>
    <ligandPart>
        <name>Fe</name>
        <dbReference type="ChEBI" id="CHEBI:18248"/>
    </ligandPart>
</feature>
<geneLocation type="chloroplast"/>
<evidence type="ECO:0000255" key="1">
    <source>
        <dbReference type="HAMAP-Rule" id="MF_00643"/>
    </source>
</evidence>
<sequence length="44" mass="4985">MTKGNANQPVSYPIFTFRWLAIHGLAIPTVFFLGAITSMQFIQR</sequence>
<protein>
    <recommendedName>
        <fullName evidence="1">Cytochrome b559 subunit beta</fullName>
    </recommendedName>
    <alternativeName>
        <fullName evidence="1">PSII reaction center subunit VI</fullName>
    </alternativeName>
</protein>